<evidence type="ECO:0000255" key="1">
    <source>
        <dbReference type="HAMAP-Rule" id="MF_01139"/>
    </source>
</evidence>
<keyword id="KW-0460">Magnesium</keyword>
<keyword id="KW-0479">Metal-binding</keyword>
<keyword id="KW-1185">Reference proteome</keyword>
<keyword id="KW-0808">Transferase</keyword>
<gene>
    <name evidence="1" type="primary">uppS</name>
    <name type="ordered locus">CV_2200</name>
</gene>
<comment type="function">
    <text evidence="1">Catalyzes the condensation of isopentenyl diphosphate (IPP) with allylic pyrophosphates generating different type of terpenoids.</text>
</comment>
<comment type="cofactor">
    <cofactor evidence="1">
        <name>Mg(2+)</name>
        <dbReference type="ChEBI" id="CHEBI:18420"/>
    </cofactor>
    <text evidence="1">Binds 2 magnesium ions per subunit.</text>
</comment>
<comment type="subunit">
    <text evidence="1">Homodimer.</text>
</comment>
<comment type="similarity">
    <text evidence="1">Belongs to the UPP synthase family.</text>
</comment>
<organism>
    <name type="scientific">Chromobacterium violaceum (strain ATCC 12472 / DSM 30191 / JCM 1249 / CCUG 213 / NBRC 12614 / NCIMB 9131 / NCTC 9757 / MK)</name>
    <dbReference type="NCBI Taxonomy" id="243365"/>
    <lineage>
        <taxon>Bacteria</taxon>
        <taxon>Pseudomonadati</taxon>
        <taxon>Pseudomonadota</taxon>
        <taxon>Betaproteobacteria</taxon>
        <taxon>Neisseriales</taxon>
        <taxon>Chromobacteriaceae</taxon>
        <taxon>Chromobacterium</taxon>
    </lineage>
</organism>
<feature type="chain" id="PRO_0000123597" description="Isoprenyl transferase">
    <location>
        <begin position="1"/>
        <end position="251"/>
    </location>
</feature>
<feature type="active site" evidence="1">
    <location>
        <position position="24"/>
    </location>
</feature>
<feature type="active site" description="Proton acceptor" evidence="1">
    <location>
        <position position="72"/>
    </location>
</feature>
<feature type="binding site" evidence="1">
    <location>
        <position position="24"/>
    </location>
    <ligand>
        <name>Mg(2+)</name>
        <dbReference type="ChEBI" id="CHEBI:18420"/>
    </ligand>
</feature>
<feature type="binding site" evidence="1">
    <location>
        <begin position="25"/>
        <end position="28"/>
    </location>
    <ligand>
        <name>substrate</name>
    </ligand>
</feature>
<feature type="binding site" evidence="1">
    <location>
        <position position="29"/>
    </location>
    <ligand>
        <name>substrate</name>
    </ligand>
</feature>
<feature type="binding site" evidence="1">
    <location>
        <position position="37"/>
    </location>
    <ligand>
        <name>substrate</name>
    </ligand>
</feature>
<feature type="binding site" evidence="1">
    <location>
        <position position="41"/>
    </location>
    <ligand>
        <name>substrate</name>
    </ligand>
</feature>
<feature type="binding site" evidence="1">
    <location>
        <begin position="69"/>
        <end position="71"/>
    </location>
    <ligand>
        <name>substrate</name>
    </ligand>
</feature>
<feature type="binding site" evidence="1">
    <location>
        <position position="73"/>
    </location>
    <ligand>
        <name>substrate</name>
    </ligand>
</feature>
<feature type="binding site" evidence="1">
    <location>
        <position position="75"/>
    </location>
    <ligand>
        <name>substrate</name>
    </ligand>
</feature>
<feature type="binding site" evidence="1">
    <location>
        <position position="186"/>
    </location>
    <ligand>
        <name>substrate</name>
    </ligand>
</feature>
<feature type="binding site" evidence="1">
    <location>
        <begin position="192"/>
        <end position="194"/>
    </location>
    <ligand>
        <name>substrate</name>
    </ligand>
</feature>
<feature type="binding site" evidence="1">
    <location>
        <position position="205"/>
    </location>
    <ligand>
        <name>Mg(2+)</name>
        <dbReference type="ChEBI" id="CHEBI:18420"/>
    </ligand>
</feature>
<name>ISPT_CHRVO</name>
<dbReference type="EC" id="2.5.1.-" evidence="1"/>
<dbReference type="EMBL" id="AE016825">
    <property type="protein sequence ID" value="AAQ59873.1"/>
    <property type="molecule type" value="Genomic_DNA"/>
</dbReference>
<dbReference type="SMR" id="Q7NVZ0"/>
<dbReference type="STRING" id="243365.CV_2200"/>
<dbReference type="KEGG" id="cvi:CV_2200"/>
<dbReference type="eggNOG" id="COG0020">
    <property type="taxonomic scope" value="Bacteria"/>
</dbReference>
<dbReference type="HOGENOM" id="CLU_038505_1_1_4"/>
<dbReference type="OrthoDB" id="4191603at2"/>
<dbReference type="Proteomes" id="UP000001424">
    <property type="component" value="Chromosome"/>
</dbReference>
<dbReference type="GO" id="GO:0005829">
    <property type="term" value="C:cytosol"/>
    <property type="evidence" value="ECO:0007669"/>
    <property type="project" value="TreeGrafter"/>
</dbReference>
<dbReference type="GO" id="GO:0008834">
    <property type="term" value="F:ditrans,polycis-undecaprenyl-diphosphate synthase [(2E,6E)-farnesyl-diphosphate specific] activity"/>
    <property type="evidence" value="ECO:0007669"/>
    <property type="project" value="TreeGrafter"/>
</dbReference>
<dbReference type="GO" id="GO:0000287">
    <property type="term" value="F:magnesium ion binding"/>
    <property type="evidence" value="ECO:0007669"/>
    <property type="project" value="UniProtKB-UniRule"/>
</dbReference>
<dbReference type="GO" id="GO:0016094">
    <property type="term" value="P:polyprenol biosynthetic process"/>
    <property type="evidence" value="ECO:0007669"/>
    <property type="project" value="TreeGrafter"/>
</dbReference>
<dbReference type="CDD" id="cd00475">
    <property type="entry name" value="Cis_IPPS"/>
    <property type="match status" value="1"/>
</dbReference>
<dbReference type="FunFam" id="3.40.1180.10:FF:000001">
    <property type="entry name" value="(2E,6E)-farnesyl-diphosphate-specific ditrans,polycis-undecaprenyl-diphosphate synthase"/>
    <property type="match status" value="1"/>
</dbReference>
<dbReference type="Gene3D" id="3.40.1180.10">
    <property type="entry name" value="Decaprenyl diphosphate synthase-like"/>
    <property type="match status" value="1"/>
</dbReference>
<dbReference type="HAMAP" id="MF_01139">
    <property type="entry name" value="ISPT"/>
    <property type="match status" value="1"/>
</dbReference>
<dbReference type="InterPro" id="IPR001441">
    <property type="entry name" value="UPP_synth-like"/>
</dbReference>
<dbReference type="InterPro" id="IPR018520">
    <property type="entry name" value="UPP_synth-like_CS"/>
</dbReference>
<dbReference type="InterPro" id="IPR036424">
    <property type="entry name" value="UPP_synth-like_sf"/>
</dbReference>
<dbReference type="NCBIfam" id="NF011405">
    <property type="entry name" value="PRK14830.1"/>
    <property type="match status" value="1"/>
</dbReference>
<dbReference type="NCBIfam" id="TIGR00055">
    <property type="entry name" value="uppS"/>
    <property type="match status" value="1"/>
</dbReference>
<dbReference type="PANTHER" id="PTHR10291:SF0">
    <property type="entry name" value="DEHYDRODOLICHYL DIPHOSPHATE SYNTHASE 2"/>
    <property type="match status" value="1"/>
</dbReference>
<dbReference type="PANTHER" id="PTHR10291">
    <property type="entry name" value="DEHYDRODOLICHYL DIPHOSPHATE SYNTHASE FAMILY MEMBER"/>
    <property type="match status" value="1"/>
</dbReference>
<dbReference type="Pfam" id="PF01255">
    <property type="entry name" value="Prenyltransf"/>
    <property type="match status" value="1"/>
</dbReference>
<dbReference type="SUPFAM" id="SSF64005">
    <property type="entry name" value="Undecaprenyl diphosphate synthase"/>
    <property type="match status" value="1"/>
</dbReference>
<dbReference type="PROSITE" id="PS01066">
    <property type="entry name" value="UPP_SYNTHASE"/>
    <property type="match status" value="1"/>
</dbReference>
<protein>
    <recommendedName>
        <fullName evidence="1">Isoprenyl transferase</fullName>
        <ecNumber evidence="1">2.5.1.-</ecNumber>
    </recommendedName>
</protein>
<sequence>MFSGSSNAVPEGREPPRHIAIIMDGNGRWAKKRFLPRVAGHKRGLDAVREVVKACKEMGVGYLTLFAFSTENWRRPQEEVSFLMDLFLRALEHEVAKLHNNNIRLKVLGSRERFSAELSERIDRAEAKTAGNDGLVLTIAADYGGRWDIVHAVNRLIAEGRSEITEEMVTDRLGMAWAPEPDLFIRTGGEQRISNFLLWQLAYSELYFTDLLWPDFDRAALQEAIHSYWQRERRFGRTSEQLPEHLRRDKL</sequence>
<proteinExistence type="inferred from homology"/>
<accession>Q7NVZ0</accession>
<reference key="1">
    <citation type="journal article" date="2003" name="Proc. Natl. Acad. Sci. U.S.A.">
        <title>The complete genome sequence of Chromobacterium violaceum reveals remarkable and exploitable bacterial adaptability.</title>
        <authorList>
            <person name="Vasconcelos A.T.R."/>
            <person name="de Almeida D.F."/>
            <person name="Hungria M."/>
            <person name="Guimaraes C.T."/>
            <person name="Antonio R.V."/>
            <person name="Almeida F.C."/>
            <person name="de Almeida L.G.P."/>
            <person name="de Almeida R."/>
            <person name="Alves-Gomes J.A."/>
            <person name="Andrade E.M."/>
            <person name="Araripe J."/>
            <person name="de Araujo M.F.F."/>
            <person name="Astolfi-Filho S."/>
            <person name="Azevedo V."/>
            <person name="Baptista A.J."/>
            <person name="Bataus L.A.M."/>
            <person name="Batista J.S."/>
            <person name="Belo A."/>
            <person name="van den Berg C."/>
            <person name="Bogo M."/>
            <person name="Bonatto S."/>
            <person name="Bordignon J."/>
            <person name="Brigido M.M."/>
            <person name="Brito C.A."/>
            <person name="Brocchi M."/>
            <person name="Burity H.A."/>
            <person name="Camargo A.A."/>
            <person name="Cardoso D.D.P."/>
            <person name="Carneiro N.P."/>
            <person name="Carraro D.M."/>
            <person name="Carvalho C.M.B."/>
            <person name="Cascardo J.C.M."/>
            <person name="Cavada B.S."/>
            <person name="Chueire L.M.O."/>
            <person name="Creczynski-Pasa T.B."/>
            <person name="Cunha-Junior N.C."/>
            <person name="Fagundes N."/>
            <person name="Falcao C.L."/>
            <person name="Fantinatti F."/>
            <person name="Farias I.P."/>
            <person name="Felipe M.S.S."/>
            <person name="Ferrari L.P."/>
            <person name="Ferro J.A."/>
            <person name="Ferro M.I.T."/>
            <person name="Franco G.R."/>
            <person name="Freitas N.S.A."/>
            <person name="Furlan L.R."/>
            <person name="Gazzinelli R.T."/>
            <person name="Gomes E.A."/>
            <person name="Goncalves P.R."/>
            <person name="Grangeiro T.B."/>
            <person name="Grattapaglia D."/>
            <person name="Grisard E.C."/>
            <person name="Hanna E.S."/>
            <person name="Jardim S.N."/>
            <person name="Laurino J."/>
            <person name="Leoi L.C.T."/>
            <person name="Lima L.F.A."/>
            <person name="Loureiro M.F."/>
            <person name="Lyra M.C.C.P."/>
            <person name="Madeira H.M.F."/>
            <person name="Manfio G.P."/>
            <person name="Maranhao A.Q."/>
            <person name="Martins W.S."/>
            <person name="di Mauro S.M.Z."/>
            <person name="de Medeiros S.R.B."/>
            <person name="Meissner R.V."/>
            <person name="Moreira M.A.M."/>
            <person name="Nascimento F.F."/>
            <person name="Nicolas M.F."/>
            <person name="Oliveira J.G."/>
            <person name="Oliveira S.C."/>
            <person name="Paixao R.F.C."/>
            <person name="Parente J.A."/>
            <person name="Pedrosa F.O."/>
            <person name="Pena S.D.J."/>
            <person name="Pereira J.O."/>
            <person name="Pereira M."/>
            <person name="Pinto L.S.R.C."/>
            <person name="Pinto L.S."/>
            <person name="Porto J.I.R."/>
            <person name="Potrich D.P."/>
            <person name="Ramalho-Neto C.E."/>
            <person name="Reis A.M.M."/>
            <person name="Rigo L.U."/>
            <person name="Rondinelli E."/>
            <person name="Santos E.B.P."/>
            <person name="Santos F.R."/>
            <person name="Schneider M.P.C."/>
            <person name="Seuanez H.N."/>
            <person name="Silva A.M.R."/>
            <person name="da Silva A.L.C."/>
            <person name="Silva D.W."/>
            <person name="Silva R."/>
            <person name="Simoes I.C."/>
            <person name="Simon D."/>
            <person name="Soares C.M.A."/>
            <person name="Soares R.B.A."/>
            <person name="Souza E.M."/>
            <person name="Souza K.R.L."/>
            <person name="Souza R.C."/>
            <person name="Steffens M.B.R."/>
            <person name="Steindel M."/>
            <person name="Teixeira S.R."/>
            <person name="Urmenyi T."/>
            <person name="Vettore A."/>
            <person name="Wassem R."/>
            <person name="Zaha A."/>
            <person name="Simpson A.J.G."/>
        </authorList>
    </citation>
    <scope>NUCLEOTIDE SEQUENCE [LARGE SCALE GENOMIC DNA]</scope>
    <source>
        <strain>ATCC 12472 / DSM 30191 / JCM 1249 / CCUG 213 / NBRC 12614 / NCIMB 9131 / NCTC 9757 / MK</strain>
    </source>
</reference>